<accession>Q0P5I8</accession>
<evidence type="ECO:0000250" key="1">
    <source>
        <dbReference type="UniProtKB" id="Q7L5D6"/>
    </source>
</evidence>
<evidence type="ECO:0000256" key="2">
    <source>
        <dbReference type="SAM" id="MobiDB-lite"/>
    </source>
</evidence>
<evidence type="ECO:0000305" key="3"/>
<gene>
    <name type="primary">GET4</name>
</gene>
<reference key="1">
    <citation type="submission" date="2006-08" db="EMBL/GenBank/DDBJ databases">
        <authorList>
            <consortium name="NIH - Mammalian Gene Collection (MGC) project"/>
        </authorList>
    </citation>
    <scope>NUCLEOTIDE SEQUENCE [LARGE SCALE MRNA]</scope>
    <source>
        <strain>Hereford</strain>
        <tissue>Fetal skin</tissue>
    </source>
</reference>
<comment type="function">
    <text evidence="1">As part of a cytosolic protein quality control complex, the BAG6/BAT3 complex, maintains misfolded and hydrophobic patches-containing proteins in a soluble state and participates in their proper delivery to the endoplasmic reticulum or alternatively can promote their sorting to the proteasome where they undergo degradation. The BAG6/BAT3 complex is involved in the post-translational delivery of tail-anchored/type II transmembrane proteins to the endoplasmic reticulum membrane. Recruited to ribosomes, it interacts with the transmembrane region of newly synthesized tail-anchored proteins and together with SGTA and ASNA1 mediates their delivery to the endoplasmic reticulum. Client proteins that cannot be properly delivered to the endoplasmic reticulum are ubiquitinated and sorted to the proteasome. Similarly, the BAG6/BAT3 complex also functions as a sorting platform for proteins of the secretory pathway that are mislocalized to the cytosol either delivering them to the proteasome for degradation or to the endoplasmic reticulum. The BAG6/BAT3 complex also plays a role in the endoplasmic reticulum-associated degradation (ERAD), a quality control mechanism that eliminates unwanted proteins of the endoplasmic reticulum through their retrotranslocation to the cytosol and their targeting to the proteasome. It maintains these retrotranslocated proteins in an unfolded yet soluble state condition in the cytosol to ensure their proper delivery to the proteasome.</text>
</comment>
<comment type="subunit">
    <text evidence="1">Component of the BAG6/BAT3 complex, at least composed of BAG6, UBL4A and GET4/TRC35. Interacts with BAG6; the interaction is direct and localizes BAG6 to the cytosol. Interacts with GET3.</text>
</comment>
<comment type="subcellular location">
    <subcellularLocation>
        <location evidence="1">Cytoplasm</location>
        <location evidence="1">Cytosol</location>
    </subcellularLocation>
</comment>
<comment type="PTM">
    <text evidence="1">Ubiquitinated by RNF12, leading to proteasomal degradation. When unassembled from BAG6; ubiquitinylation is modulated by BAG6 quality control role and effectuated by RNF126.</text>
</comment>
<comment type="similarity">
    <text evidence="3">Belongs to the GET4 family.</text>
</comment>
<name>GET4_BOVIN</name>
<dbReference type="EMBL" id="BC119983">
    <property type="protein sequence ID" value="AAI19984.1"/>
    <property type="molecule type" value="mRNA"/>
</dbReference>
<dbReference type="RefSeq" id="NP_001069993.1">
    <property type="nucleotide sequence ID" value="NM_001076525.1"/>
</dbReference>
<dbReference type="RefSeq" id="XP_010817981.1">
    <property type="nucleotide sequence ID" value="XM_010819679.1"/>
</dbReference>
<dbReference type="RefSeq" id="XP_015324964.1">
    <property type="nucleotide sequence ID" value="XM_015469478.1"/>
</dbReference>
<dbReference type="SMR" id="Q0P5I8"/>
<dbReference type="FunCoup" id="Q0P5I8">
    <property type="interactions" value="3919"/>
</dbReference>
<dbReference type="STRING" id="9913.ENSBTAP00000036940"/>
<dbReference type="PaxDb" id="9913-ENSBTAP00000036940"/>
<dbReference type="Ensembl" id="ENSBTAT00000037101.4">
    <property type="protein sequence ID" value="ENSBTAP00000036940.4"/>
    <property type="gene ID" value="ENSBTAG00000026191.6"/>
</dbReference>
<dbReference type="GeneID" id="618954"/>
<dbReference type="KEGG" id="bta:618954"/>
<dbReference type="CTD" id="51608"/>
<dbReference type="VEuPathDB" id="HostDB:ENSBTAG00000026191"/>
<dbReference type="VGNC" id="VGNC:97274">
    <property type="gene designation" value="GET4"/>
</dbReference>
<dbReference type="eggNOG" id="KOG3024">
    <property type="taxonomic scope" value="Eukaryota"/>
</dbReference>
<dbReference type="GeneTree" id="ENSGT00390000015750"/>
<dbReference type="HOGENOM" id="CLU_046061_2_1_1"/>
<dbReference type="InParanoid" id="Q0P5I8"/>
<dbReference type="OMA" id="LMDMMGM"/>
<dbReference type="OrthoDB" id="10252405at2759"/>
<dbReference type="Proteomes" id="UP000009136">
    <property type="component" value="Chromosome 25"/>
</dbReference>
<dbReference type="Bgee" id="ENSBTAG00000026191">
    <property type="expression patterns" value="Expressed in retina and 105 other cell types or tissues"/>
</dbReference>
<dbReference type="GO" id="GO:0071818">
    <property type="term" value="C:BAT3 complex"/>
    <property type="evidence" value="ECO:0000250"/>
    <property type="project" value="UniProtKB"/>
</dbReference>
<dbReference type="GO" id="GO:0005829">
    <property type="term" value="C:cytosol"/>
    <property type="evidence" value="ECO:0000250"/>
    <property type="project" value="UniProtKB"/>
</dbReference>
<dbReference type="GO" id="GO:0045048">
    <property type="term" value="P:protein insertion into ER membrane"/>
    <property type="evidence" value="ECO:0000250"/>
    <property type="project" value="UniProtKB"/>
</dbReference>
<dbReference type="GO" id="GO:0071816">
    <property type="term" value="P:tail-anchored membrane protein insertion into ER membrane"/>
    <property type="evidence" value="ECO:0000250"/>
    <property type="project" value="UniProtKB"/>
</dbReference>
<dbReference type="FunFam" id="1.25.40.10:FF:000060">
    <property type="entry name" value="Golgi to ER traffic protein 4 homolog"/>
    <property type="match status" value="1"/>
</dbReference>
<dbReference type="Gene3D" id="1.25.40.10">
    <property type="entry name" value="Tetratricopeptide repeat domain"/>
    <property type="match status" value="1"/>
</dbReference>
<dbReference type="InterPro" id="IPR007317">
    <property type="entry name" value="GET4"/>
</dbReference>
<dbReference type="InterPro" id="IPR011990">
    <property type="entry name" value="TPR-like_helical_dom_sf"/>
</dbReference>
<dbReference type="PANTHER" id="PTHR12875">
    <property type="entry name" value="GOLGI TO ER TRAFFIC PROTEIN 4 HOMOLOG"/>
    <property type="match status" value="1"/>
</dbReference>
<dbReference type="PANTHER" id="PTHR12875:SF0">
    <property type="entry name" value="GOLGI TO ER TRAFFIC PROTEIN 4 HOMOLOG"/>
    <property type="match status" value="1"/>
</dbReference>
<dbReference type="Pfam" id="PF04190">
    <property type="entry name" value="GET4"/>
    <property type="match status" value="1"/>
</dbReference>
<feature type="chain" id="PRO_0000328386" description="Golgi to ER traffic protein 4 homolog">
    <location>
        <begin position="1"/>
        <end position="325"/>
    </location>
</feature>
<feature type="region of interest" description="Interacts with BAG6" evidence="1">
    <location>
        <begin position="194"/>
        <end position="270"/>
    </location>
</feature>
<feature type="region of interest" description="Disordered" evidence="2">
    <location>
        <begin position="306"/>
        <end position="325"/>
    </location>
</feature>
<feature type="modified residue" description="Phosphoserine" evidence="1">
    <location>
        <position position="11"/>
    </location>
</feature>
<organism>
    <name type="scientific">Bos taurus</name>
    <name type="common">Bovine</name>
    <dbReference type="NCBI Taxonomy" id="9913"/>
    <lineage>
        <taxon>Eukaryota</taxon>
        <taxon>Metazoa</taxon>
        <taxon>Chordata</taxon>
        <taxon>Craniata</taxon>
        <taxon>Vertebrata</taxon>
        <taxon>Euteleostomi</taxon>
        <taxon>Mammalia</taxon>
        <taxon>Eutheria</taxon>
        <taxon>Laurasiatheria</taxon>
        <taxon>Artiodactyla</taxon>
        <taxon>Ruminantia</taxon>
        <taxon>Pecora</taxon>
        <taxon>Bovidae</taxon>
        <taxon>Bovinae</taxon>
        <taxon>Bos</taxon>
    </lineage>
</organism>
<sequence length="325" mass="36185">MAAAAMAEQESARNGARNRGGVQRVEGKLRASVEKGDYYEAHQMYRTLFFRYMAQSKHAEARELMCSGALLFFSHGQQNSAADLSMLVLESLEKAEVEVADELLESLAKLFSLMDPNSPERVAFVSRALKWSSGGSGKLGHPRLHQLLALTLWKEQNYCESRYHFLHSSDGEGCANMLVEYSTARGFRSEVDMFVAQAVLQFLCLKNKSSASVVFTTYTQKHPSIEGGPPFVQPLLNFIWFLLLAVDGGKLTVFTVLCEQYQPSLRRDPMYNEYLDRIGQLFFGVPPKQTSSYGGLLGNLLSSLMGSSEQEGEDSQDDSSPIELD</sequence>
<keyword id="KW-0963">Cytoplasm</keyword>
<keyword id="KW-0597">Phosphoprotein</keyword>
<keyword id="KW-1185">Reference proteome</keyword>
<keyword id="KW-0813">Transport</keyword>
<keyword id="KW-0832">Ubl conjugation</keyword>
<protein>
    <recommendedName>
        <fullName>Golgi to ER traffic protein 4 homolog</fullName>
    </recommendedName>
</protein>
<proteinExistence type="evidence at transcript level"/>